<proteinExistence type="evidence at protein level"/>
<comment type="function">
    <text evidence="4">Probable toxin.</text>
</comment>
<comment type="subcellular location">
    <subcellularLocation>
        <location evidence="2">Secreted</location>
    </subcellularLocation>
</comment>
<comment type="tissue specificity">
    <text evidence="2">Expressed by the venom apparatus.</text>
</comment>
<comment type="developmental stage">
    <text evidence="2">Larvae.</text>
</comment>
<comment type="PTM">
    <text evidence="5">Contains 2 disulfide bonds.</text>
</comment>
<comment type="mass spectrometry">
    <text>Monoisotopic mass.</text>
</comment>
<comment type="similarity">
    <text evidence="4">Belongs to the caterpillar 8 family.</text>
</comment>
<protein>
    <recommendedName>
        <fullName evidence="3">U-megalopygitoxin(8)-Mc8</fullName>
        <shortName evidence="3">U-MPTX(8)-Mc8</shortName>
        <shortName evidence="6">U-MPTX.8-Mc8</shortName>
    </recommendedName>
    <alternativeName>
        <fullName evidence="3">Aerolysin-like pore-forming toxin</fullName>
    </alternativeName>
    <alternativeName>
        <fullName evidence="3">Megalysin</fullName>
    </alternativeName>
</protein>
<reference key="1">
    <citation type="journal article" date="2023" name="Proc. Natl. Acad. Sci. U.S.A.">
        <title>Horizontal gene transfer underlies the painful stings of asp caterpillars (Lepidoptera: Megalopygidae).</title>
        <authorList>
            <person name="Walker A.A."/>
            <person name="Robinson S.D."/>
            <person name="Merritt D.J."/>
            <person name="Cardoso F.C."/>
            <person name="Goudarzi M.H."/>
            <person name="Mercedes R.S."/>
            <person name="Eagles D.A."/>
            <person name="Cooper P."/>
            <person name="Zdenek C.N."/>
            <person name="Fry B.G."/>
            <person name="Hall D.W."/>
            <person name="Vetter I."/>
            <person name="King G.F."/>
        </authorList>
    </citation>
    <scope>NUCLEOTIDE SEQUENCE [MRNA]</scope>
    <scope>MASS SPECTROMETRY</scope>
    <scope>SUBCELLULAR LOCATION</scope>
    <scope>TISSUE SPECIFICITY</scope>
    <scope>DEVELOPMENTAL STAGE</scope>
    <source>
        <tissue>Venom</tissue>
    </source>
</reference>
<name>TXU88_MEGCS</name>
<sequence>MYLQYLVLSLFSTTVYGGFNLNFDSKGDALENAAIDFTGEDVAVIKENERESFGITDGPLKDACGKVSGRRPDHVWLYKPTLWGDMYTMYNWREVTRTLRPIGARVVGKEQKPTIVSSQIYKNRSSRTVKMNGKISQEVTNTVENKWSQTHGLSVTASMTYSFKVVEASMEIGYTSEWGKEETKSESVAVGQEMGFEVELEPGESVEAVLSATKGSMIVDVTYRATLDGCCAINYNKGWKGHHYYCYPIGLVQDTGKLKKHVDIKETIKIGFYSDSHVIVRDKHAKK</sequence>
<accession>P0DXX3</accession>
<dbReference type="EMBL" id="OP514907">
    <property type="protein sequence ID" value="WJJ70425.1"/>
    <property type="molecule type" value="mRNA"/>
</dbReference>
<dbReference type="GO" id="GO:0005576">
    <property type="term" value="C:extracellular region"/>
    <property type="evidence" value="ECO:0007669"/>
    <property type="project" value="UniProtKB-SubCell"/>
</dbReference>
<dbReference type="GO" id="GO:0090729">
    <property type="term" value="F:toxin activity"/>
    <property type="evidence" value="ECO:0007669"/>
    <property type="project" value="UniProtKB-KW"/>
</dbReference>
<dbReference type="CDD" id="cd20235">
    <property type="entry name" value="PFM_spherulin-2a-like"/>
    <property type="match status" value="1"/>
</dbReference>
<dbReference type="Gene3D" id="2.170.15.10">
    <property type="entry name" value="Proaerolysin, chain A, domain 3"/>
    <property type="match status" value="1"/>
</dbReference>
<dbReference type="SUPFAM" id="SSF56973">
    <property type="entry name" value="Aerolisin/ETX pore-forming domain"/>
    <property type="match status" value="1"/>
</dbReference>
<evidence type="ECO:0000255" key="1"/>
<evidence type="ECO:0000269" key="2">
    <source>
    </source>
</evidence>
<evidence type="ECO:0000303" key="3">
    <source>
    </source>
</evidence>
<evidence type="ECO:0000305" key="4"/>
<evidence type="ECO:0000305" key="5">
    <source>
    </source>
</evidence>
<evidence type="ECO:0000312" key="6">
    <source>
        <dbReference type="EMBL" id="WJJ70425.1"/>
    </source>
</evidence>
<keyword id="KW-1015">Disulfide bond</keyword>
<keyword id="KW-0964">Secreted</keyword>
<keyword id="KW-0732">Signal</keyword>
<keyword id="KW-0800">Toxin</keyword>
<organism>
    <name type="scientific">Megalopyge crispata</name>
    <name type="common">Black-waved flannel moth</name>
    <name type="synonym">Lagoa crispata</name>
    <dbReference type="NCBI Taxonomy" id="1407617"/>
    <lineage>
        <taxon>Eukaryota</taxon>
        <taxon>Metazoa</taxon>
        <taxon>Ecdysozoa</taxon>
        <taxon>Arthropoda</taxon>
        <taxon>Hexapoda</taxon>
        <taxon>Insecta</taxon>
        <taxon>Pterygota</taxon>
        <taxon>Neoptera</taxon>
        <taxon>Endopterygota</taxon>
        <taxon>Lepidoptera</taxon>
        <taxon>Glossata</taxon>
        <taxon>Ditrysia</taxon>
        <taxon>Zygaenoidea</taxon>
        <taxon>Megalopygidae</taxon>
        <taxon>Megalopyge</taxon>
    </lineage>
</organism>
<feature type="signal peptide" evidence="1">
    <location>
        <begin position="1"/>
        <end position="17"/>
    </location>
</feature>
<feature type="chain" id="PRO_0000461531" description="U-megalopygitoxin(8)-Mc8" evidence="5">
    <location>
        <begin position="18"/>
        <end position="287"/>
    </location>
</feature>